<comment type="catalytic activity">
    <reaction evidence="1">
        <text>1-(5-phospho-beta-D-ribosyl)-5-[(5-phospho-beta-D-ribosylamino)methylideneamino]imidazole-4-carboxamide = 5-[(5-phospho-1-deoxy-D-ribulos-1-ylimino)methylamino]-1-(5-phospho-beta-D-ribosyl)imidazole-4-carboxamide</text>
        <dbReference type="Rhea" id="RHEA:15469"/>
        <dbReference type="ChEBI" id="CHEBI:58435"/>
        <dbReference type="ChEBI" id="CHEBI:58525"/>
        <dbReference type="EC" id="5.3.1.16"/>
    </reaction>
</comment>
<comment type="pathway">
    <text evidence="1">Amino-acid biosynthesis; L-histidine biosynthesis; L-histidine from 5-phospho-alpha-D-ribose 1-diphosphate: step 4/9.</text>
</comment>
<comment type="subcellular location">
    <subcellularLocation>
        <location evidence="1">Cytoplasm</location>
    </subcellularLocation>
</comment>
<comment type="similarity">
    <text evidence="1">Belongs to the HisA/HisF family.</text>
</comment>
<proteinExistence type="inferred from homology"/>
<sequence>MILFPAIDLKDGQCVRLKLGDMEQATVYNPDPGAQAKAFEDQGFEWLHVVDLNGAFAGESVNGAAVDAILKATKNPVQLGGGIRSLAHIETWLQHGLSRVILGTVAVRDPALVIEACKLFPGKIAVGIDAKGGKVAVEGWAEASELGVVELAKKFEGAGVAAIIYTDIDRDGILTGINWESTLELADAVSIPVIASGGLASIEDIRRMLEPDARKLEGAISGRALYDGRIDPAEALALIQAAKG</sequence>
<dbReference type="EC" id="5.3.1.16" evidence="1"/>
<dbReference type="EMBL" id="CP000633">
    <property type="protein sequence ID" value="ACM34998.1"/>
    <property type="molecule type" value="Genomic_DNA"/>
</dbReference>
<dbReference type="RefSeq" id="WP_012654528.1">
    <property type="nucleotide sequence ID" value="NC_011989.1"/>
</dbReference>
<dbReference type="SMR" id="B9JXW8"/>
<dbReference type="STRING" id="311402.Avi_0036"/>
<dbReference type="KEGG" id="avi:Avi_0036"/>
<dbReference type="eggNOG" id="COG0106">
    <property type="taxonomic scope" value="Bacteria"/>
</dbReference>
<dbReference type="HOGENOM" id="CLU_048577_1_1_5"/>
<dbReference type="UniPathway" id="UPA00031">
    <property type="reaction ID" value="UER00009"/>
</dbReference>
<dbReference type="Proteomes" id="UP000001596">
    <property type="component" value="Chromosome 1"/>
</dbReference>
<dbReference type="GO" id="GO:0005737">
    <property type="term" value="C:cytoplasm"/>
    <property type="evidence" value="ECO:0007669"/>
    <property type="project" value="UniProtKB-SubCell"/>
</dbReference>
<dbReference type="GO" id="GO:0003949">
    <property type="term" value="F:1-(5-phosphoribosyl)-5-[(5-phosphoribosylamino)methylideneamino]imidazole-4-carboxamide isomerase activity"/>
    <property type="evidence" value="ECO:0007669"/>
    <property type="project" value="UniProtKB-UniRule"/>
</dbReference>
<dbReference type="GO" id="GO:0000105">
    <property type="term" value="P:L-histidine biosynthetic process"/>
    <property type="evidence" value="ECO:0007669"/>
    <property type="project" value="UniProtKB-UniRule"/>
</dbReference>
<dbReference type="GO" id="GO:0000162">
    <property type="term" value="P:L-tryptophan biosynthetic process"/>
    <property type="evidence" value="ECO:0007669"/>
    <property type="project" value="TreeGrafter"/>
</dbReference>
<dbReference type="CDD" id="cd04732">
    <property type="entry name" value="HisA"/>
    <property type="match status" value="1"/>
</dbReference>
<dbReference type="FunFam" id="3.20.20.70:FF:000009">
    <property type="entry name" value="1-(5-phosphoribosyl)-5-[(5-phosphoribosylamino)methylideneamino] imidazole-4-carboxamide isomerase"/>
    <property type="match status" value="1"/>
</dbReference>
<dbReference type="Gene3D" id="3.20.20.70">
    <property type="entry name" value="Aldolase class I"/>
    <property type="match status" value="1"/>
</dbReference>
<dbReference type="HAMAP" id="MF_01014">
    <property type="entry name" value="HisA"/>
    <property type="match status" value="1"/>
</dbReference>
<dbReference type="InterPro" id="IPR013785">
    <property type="entry name" value="Aldolase_TIM"/>
</dbReference>
<dbReference type="InterPro" id="IPR006062">
    <property type="entry name" value="His_biosynth"/>
</dbReference>
<dbReference type="InterPro" id="IPR006063">
    <property type="entry name" value="HisA_bact_arch"/>
</dbReference>
<dbReference type="InterPro" id="IPR044524">
    <property type="entry name" value="Isoase_HisA-like"/>
</dbReference>
<dbReference type="InterPro" id="IPR023016">
    <property type="entry name" value="Isoase_HisA-like_bact"/>
</dbReference>
<dbReference type="InterPro" id="IPR011060">
    <property type="entry name" value="RibuloseP-bd_barrel"/>
</dbReference>
<dbReference type="NCBIfam" id="TIGR00007">
    <property type="entry name" value="1-(5-phosphoribosyl)-5-[(5-phosphoribosylamino)methylideneamino]imidazole-4-carboxamide isomerase"/>
    <property type="match status" value="1"/>
</dbReference>
<dbReference type="PANTHER" id="PTHR43090">
    <property type="entry name" value="1-(5-PHOSPHORIBOSYL)-5-[(5-PHOSPHORIBOSYLAMINO)METHYLIDENEAMINO] IMIDAZOLE-4-CARBOXAMIDE ISOMERASE"/>
    <property type="match status" value="1"/>
</dbReference>
<dbReference type="PANTHER" id="PTHR43090:SF2">
    <property type="entry name" value="1-(5-PHOSPHORIBOSYL)-5-[(5-PHOSPHORIBOSYLAMINO)METHYLIDENEAMINO] IMIDAZOLE-4-CARBOXAMIDE ISOMERASE"/>
    <property type="match status" value="1"/>
</dbReference>
<dbReference type="Pfam" id="PF00977">
    <property type="entry name" value="His_biosynth"/>
    <property type="match status" value="1"/>
</dbReference>
<dbReference type="SUPFAM" id="SSF51366">
    <property type="entry name" value="Ribulose-phoshate binding barrel"/>
    <property type="match status" value="1"/>
</dbReference>
<gene>
    <name evidence="1" type="primary">hisA</name>
    <name type="ordered locus">Avi_0036</name>
</gene>
<evidence type="ECO:0000255" key="1">
    <source>
        <dbReference type="HAMAP-Rule" id="MF_01014"/>
    </source>
</evidence>
<protein>
    <recommendedName>
        <fullName evidence="1">1-(5-phosphoribosyl)-5-[(5-phosphoribosylamino)methylideneamino] imidazole-4-carboxamide isomerase</fullName>
        <ecNumber evidence="1">5.3.1.16</ecNumber>
    </recommendedName>
    <alternativeName>
        <fullName evidence="1">Phosphoribosylformimino-5-aminoimidazole carboxamide ribotide isomerase</fullName>
    </alternativeName>
</protein>
<keyword id="KW-0028">Amino-acid biosynthesis</keyword>
<keyword id="KW-0963">Cytoplasm</keyword>
<keyword id="KW-0368">Histidine biosynthesis</keyword>
<keyword id="KW-0413">Isomerase</keyword>
<keyword id="KW-1185">Reference proteome</keyword>
<feature type="chain" id="PRO_1000148946" description="1-(5-phosphoribosyl)-5-[(5-phosphoribosylamino)methylideneamino] imidazole-4-carboxamide isomerase">
    <location>
        <begin position="1"/>
        <end position="244"/>
    </location>
</feature>
<feature type="active site" description="Proton acceptor" evidence="1">
    <location>
        <position position="8"/>
    </location>
</feature>
<feature type="active site" description="Proton donor" evidence="1">
    <location>
        <position position="129"/>
    </location>
</feature>
<name>HIS4_ALLAM</name>
<organism>
    <name type="scientific">Allorhizobium ampelinum (strain ATCC BAA-846 / DSM 112012 / S4)</name>
    <name type="common">Agrobacterium vitis (strain S4)</name>
    <dbReference type="NCBI Taxonomy" id="311402"/>
    <lineage>
        <taxon>Bacteria</taxon>
        <taxon>Pseudomonadati</taxon>
        <taxon>Pseudomonadota</taxon>
        <taxon>Alphaproteobacteria</taxon>
        <taxon>Hyphomicrobiales</taxon>
        <taxon>Rhizobiaceae</taxon>
        <taxon>Rhizobium/Agrobacterium group</taxon>
        <taxon>Allorhizobium</taxon>
        <taxon>Allorhizobium ampelinum</taxon>
    </lineage>
</organism>
<accession>B9JXW8</accession>
<reference key="1">
    <citation type="journal article" date="2009" name="J. Bacteriol.">
        <title>Genome sequences of three Agrobacterium biovars help elucidate the evolution of multichromosome genomes in bacteria.</title>
        <authorList>
            <person name="Slater S.C."/>
            <person name="Goldman B.S."/>
            <person name="Goodner B."/>
            <person name="Setubal J.C."/>
            <person name="Farrand S.K."/>
            <person name="Nester E.W."/>
            <person name="Burr T.J."/>
            <person name="Banta L."/>
            <person name="Dickerman A.W."/>
            <person name="Paulsen I."/>
            <person name="Otten L."/>
            <person name="Suen G."/>
            <person name="Welch R."/>
            <person name="Almeida N.F."/>
            <person name="Arnold F."/>
            <person name="Burton O.T."/>
            <person name="Du Z."/>
            <person name="Ewing A."/>
            <person name="Godsy E."/>
            <person name="Heisel S."/>
            <person name="Houmiel K.L."/>
            <person name="Jhaveri J."/>
            <person name="Lu J."/>
            <person name="Miller N.M."/>
            <person name="Norton S."/>
            <person name="Chen Q."/>
            <person name="Phoolcharoen W."/>
            <person name="Ohlin V."/>
            <person name="Ondrusek D."/>
            <person name="Pride N."/>
            <person name="Stricklin S.L."/>
            <person name="Sun J."/>
            <person name="Wheeler C."/>
            <person name="Wilson L."/>
            <person name="Zhu H."/>
            <person name="Wood D.W."/>
        </authorList>
    </citation>
    <scope>NUCLEOTIDE SEQUENCE [LARGE SCALE GENOMIC DNA]</scope>
    <source>
        <strain>ATCC BAA-846 / DSM 112012 / S4</strain>
    </source>
</reference>